<protein>
    <recommendedName>
        <fullName>Mitochondrial intermediate peptidase</fullName>
        <shortName>MIP</shortName>
        <ecNumber>3.4.24.59</ecNumber>
    </recommendedName>
    <alternativeName>
        <fullName>Octapeptidyl aminopeptidase</fullName>
    </alternativeName>
</protein>
<feature type="transit peptide" description="Mitochondrion" evidence="2">
    <location>
        <begin position="1"/>
        <end position="29"/>
    </location>
</feature>
<feature type="chain" id="PRO_0000338588" description="Mitochondrial intermediate peptidase">
    <location>
        <begin position="30"/>
        <end position="806"/>
    </location>
</feature>
<feature type="active site" evidence="3">
    <location>
        <position position="582"/>
    </location>
</feature>
<feature type="binding site" evidence="3">
    <location>
        <position position="581"/>
    </location>
    <ligand>
        <name>Zn(2+)</name>
        <dbReference type="ChEBI" id="CHEBI:29105"/>
        <note>catalytic</note>
    </ligand>
</feature>
<feature type="binding site" evidence="3">
    <location>
        <position position="585"/>
    </location>
    <ligand>
        <name>Zn(2+)</name>
        <dbReference type="ChEBI" id="CHEBI:29105"/>
        <note>catalytic</note>
    </ligand>
</feature>
<feature type="binding site" evidence="3">
    <location>
        <position position="588"/>
    </location>
    <ligand>
        <name>Zn(2+)</name>
        <dbReference type="ChEBI" id="CHEBI:29105"/>
        <note>catalytic</note>
    </ligand>
</feature>
<reference key="1">
    <citation type="journal article" date="2007" name="Proc. Natl. Acad. Sci. U.S.A.">
        <title>Dandruff-associated Malassezia genomes reveal convergent and divergent virulence traits shared with plant and human fungal pathogens.</title>
        <authorList>
            <person name="Xu J."/>
            <person name="Saunders C.W."/>
            <person name="Hu P."/>
            <person name="Grant R.A."/>
            <person name="Boekhout T."/>
            <person name="Kuramae E.E."/>
            <person name="Kronstad J.W."/>
            <person name="DeAngelis Y.M."/>
            <person name="Reeder N.L."/>
            <person name="Johnstone K.R."/>
            <person name="Leland M."/>
            <person name="Fieno A.M."/>
            <person name="Begley W.M."/>
            <person name="Sun Y."/>
            <person name="Lacey M.P."/>
            <person name="Chaudhary T."/>
            <person name="Keough T."/>
            <person name="Chu L."/>
            <person name="Sears R."/>
            <person name="Yuan B."/>
            <person name="Dawson T.L. Jr."/>
        </authorList>
    </citation>
    <scope>NUCLEOTIDE SEQUENCE [LARGE SCALE GENOMIC DNA]</scope>
    <source>
        <strain>ATCC MYA-4612 / CBS 7966</strain>
    </source>
</reference>
<organism>
    <name type="scientific">Malassezia globosa (strain ATCC MYA-4612 / CBS 7966)</name>
    <name type="common">Dandruff-associated fungus</name>
    <dbReference type="NCBI Taxonomy" id="425265"/>
    <lineage>
        <taxon>Eukaryota</taxon>
        <taxon>Fungi</taxon>
        <taxon>Dikarya</taxon>
        <taxon>Basidiomycota</taxon>
        <taxon>Ustilaginomycotina</taxon>
        <taxon>Malasseziomycetes</taxon>
        <taxon>Malasseziales</taxon>
        <taxon>Malasseziaceae</taxon>
        <taxon>Malassezia</taxon>
    </lineage>
</organism>
<name>PMIP_MALGO</name>
<dbReference type="EC" id="3.4.24.59"/>
<dbReference type="EMBL" id="AAYY01000015">
    <property type="protein sequence ID" value="EDP41872.1"/>
    <property type="status" value="ALT_INIT"/>
    <property type="molecule type" value="Genomic_DNA"/>
</dbReference>
<dbReference type="RefSeq" id="XP_001729086.1">
    <property type="nucleotide sequence ID" value="XM_001729034.1"/>
</dbReference>
<dbReference type="SMR" id="A8QB25"/>
<dbReference type="FunCoup" id="A8QB25">
    <property type="interactions" value="284"/>
</dbReference>
<dbReference type="STRING" id="425265.A8QB25"/>
<dbReference type="GeneID" id="5853393"/>
<dbReference type="KEGG" id="mgl:MGL_3874"/>
<dbReference type="VEuPathDB" id="FungiDB:MGL_3874"/>
<dbReference type="InParanoid" id="A8QB25"/>
<dbReference type="OrthoDB" id="17530at2759"/>
<dbReference type="Proteomes" id="UP000008837">
    <property type="component" value="Unassembled WGS sequence"/>
</dbReference>
<dbReference type="GO" id="GO:0005759">
    <property type="term" value="C:mitochondrial matrix"/>
    <property type="evidence" value="ECO:0007669"/>
    <property type="project" value="UniProtKB-SubCell"/>
</dbReference>
<dbReference type="GO" id="GO:0046872">
    <property type="term" value="F:metal ion binding"/>
    <property type="evidence" value="ECO:0007669"/>
    <property type="project" value="UniProtKB-KW"/>
</dbReference>
<dbReference type="GO" id="GO:0004222">
    <property type="term" value="F:metalloendopeptidase activity"/>
    <property type="evidence" value="ECO:0007669"/>
    <property type="project" value="UniProtKB-EC"/>
</dbReference>
<dbReference type="GO" id="GO:0006518">
    <property type="term" value="P:peptide metabolic process"/>
    <property type="evidence" value="ECO:0007669"/>
    <property type="project" value="TreeGrafter"/>
</dbReference>
<dbReference type="GO" id="GO:0006627">
    <property type="term" value="P:protein processing involved in protein targeting to mitochondrion"/>
    <property type="evidence" value="ECO:0007669"/>
    <property type="project" value="TreeGrafter"/>
</dbReference>
<dbReference type="CDD" id="cd06457">
    <property type="entry name" value="M3A_MIP"/>
    <property type="match status" value="1"/>
</dbReference>
<dbReference type="FunFam" id="3.40.390.10:FF:000055">
    <property type="entry name" value="Related to mitochondrial intermediate peptidase"/>
    <property type="match status" value="1"/>
</dbReference>
<dbReference type="Gene3D" id="3.40.390.10">
    <property type="entry name" value="Collagenase (Catalytic Domain)"/>
    <property type="match status" value="1"/>
</dbReference>
<dbReference type="Gene3D" id="1.10.1370.10">
    <property type="entry name" value="Neurolysin, domain 3"/>
    <property type="match status" value="1"/>
</dbReference>
<dbReference type="InterPro" id="IPR033851">
    <property type="entry name" value="M3A_MIP"/>
</dbReference>
<dbReference type="InterPro" id="IPR024079">
    <property type="entry name" value="MetalloPept_cat_dom_sf"/>
</dbReference>
<dbReference type="InterPro" id="IPR024077">
    <property type="entry name" value="Neurolysin/TOP_dom2"/>
</dbReference>
<dbReference type="InterPro" id="IPR045090">
    <property type="entry name" value="Pept_M3A_M3B"/>
</dbReference>
<dbReference type="InterPro" id="IPR001567">
    <property type="entry name" value="Pept_M3A_M3B_dom"/>
</dbReference>
<dbReference type="PANTHER" id="PTHR11804:SF79">
    <property type="entry name" value="MITOCHONDRIAL INTERMEDIATE PEPTIDASE"/>
    <property type="match status" value="1"/>
</dbReference>
<dbReference type="PANTHER" id="PTHR11804">
    <property type="entry name" value="PROTEASE M3 THIMET OLIGOPEPTIDASE-RELATED"/>
    <property type="match status" value="1"/>
</dbReference>
<dbReference type="Pfam" id="PF01432">
    <property type="entry name" value="Peptidase_M3"/>
    <property type="match status" value="1"/>
</dbReference>
<dbReference type="SUPFAM" id="SSF55486">
    <property type="entry name" value="Metalloproteases ('zincins'), catalytic domain"/>
    <property type="match status" value="1"/>
</dbReference>
<dbReference type="PROSITE" id="PS00142">
    <property type="entry name" value="ZINC_PROTEASE"/>
    <property type="match status" value="1"/>
</dbReference>
<sequence>MLSRHLTVLRSACRVSHDLRVPSTQAVRKSAWSVCYSRRPLHISRSDAASTAALDMGVAPAVEKDHEILKELLDTRHSSGHVLSQGVPTGLFQIDHLRTPSDFLLLAQRTLIRCQLLVQRIARAIGNPSELARVVRNLDRLSDMLCGVIDMAELVRHAHPDQGWANAANDAYEYLCNYMNVLNTHTELYDALRCVMETKDIYHSLSQEAQAVAHIFMRDFEKSGIHLPPHERNRFVELSDQIMILGRAFLQDMSTGTSDTIVEFPTDLLDGMDTSIFAQNLFRLRPSKSIPVVPGSWELHYISKYAPNPQARRLAYMISYTGRTQPVAVLEQLLHARYELAKLTGKQSFAEMTLVDKMAGTPEHVLRFLRLLADAQRPVAQRMIAEFGQLKHALEGSSQVEIWDREYYADAYLQRHHPSQLAPLSPYLSLGSIFTGLSRLFYLLYGIHFRAAETLPGEVWHPDVLKLEVVDETESSVIGLIYCDLYTRDGKPPSAAHYTVRCSRRIDLDDTHLDMELGASADLPPVADTEHLLGVKGATGFGRPGRFQQPVVVLMTDFAPPNIGHGGACLLRWHDVETLFHEMGHAIHSMIGRTEFHNVSGTRCATDFVELPSILMEHFLTDPSVVALTAHHHRTGSPLPYVQLQKHLATQRSLDALDTHQQILLASLDQRYHSERAGAPTFSSSQELESLQADMGLFPPVSNATWQGQFGHLFGYGATYYSYLFDRAIAARVWEQVFAKKPLSREAGERFKMEVLRHGGGKSPWEMLSRLLHEDKIADGNAGAMEAIGRWGLGQNQSNETISAHL</sequence>
<comment type="function">
    <text evidence="1">Cleaves proteins, imported into the mitochondrion, to their mature size. While most mitochondrial precursor proteins are processed to the mature form in one step by mitochondrial processing peptidase (MPP), the sequential cleavage by MIP of an octapeptide after initial processing by MPP is a required step for a subgroup of nuclear-encoded precursor proteins destined for the matrix or the inner membrane (By similarity).</text>
</comment>
<comment type="catalytic activity">
    <reaction>
        <text>Release of an N-terminal octapeptide as second stage of processing of some proteins imported into the mitochondrion.</text>
        <dbReference type="EC" id="3.4.24.59"/>
    </reaction>
</comment>
<comment type="cofactor">
    <cofactor evidence="1">
        <name>Zn(2+)</name>
        <dbReference type="ChEBI" id="CHEBI:29105"/>
    </cofactor>
    <text evidence="1">Binds 1 zinc ion.</text>
</comment>
<comment type="subcellular location">
    <subcellularLocation>
        <location evidence="1">Mitochondrion matrix</location>
    </subcellularLocation>
</comment>
<comment type="similarity">
    <text evidence="4">Belongs to the peptidase M3 family.</text>
</comment>
<comment type="sequence caution" evidence="4">
    <conflict type="erroneous initiation">
        <sequence resource="EMBL-CDS" id="EDP41872"/>
    </conflict>
</comment>
<accession>A8QB25</accession>
<proteinExistence type="inferred from homology"/>
<keyword id="KW-0378">Hydrolase</keyword>
<keyword id="KW-0479">Metal-binding</keyword>
<keyword id="KW-0482">Metalloprotease</keyword>
<keyword id="KW-0496">Mitochondrion</keyword>
<keyword id="KW-0645">Protease</keyword>
<keyword id="KW-1185">Reference proteome</keyword>
<keyword id="KW-0809">Transit peptide</keyword>
<keyword id="KW-0862">Zinc</keyword>
<gene>
    <name type="primary">OCT1</name>
    <name type="ORF">MGL_3874</name>
</gene>
<evidence type="ECO:0000250" key="1"/>
<evidence type="ECO:0000255" key="2"/>
<evidence type="ECO:0000255" key="3">
    <source>
        <dbReference type="PROSITE-ProRule" id="PRU10095"/>
    </source>
</evidence>
<evidence type="ECO:0000305" key="4"/>